<reference key="1">
    <citation type="journal article" date="2009" name="PLoS ONE">
        <title>Genome degradation in Brucella ovis corresponds with narrowing of its host range and tissue tropism.</title>
        <authorList>
            <person name="Tsolis R.M."/>
            <person name="Seshadri R."/>
            <person name="Santos R.L."/>
            <person name="Sangari F.J."/>
            <person name="Lobo J.M."/>
            <person name="de Jong M.F."/>
            <person name="Ren Q."/>
            <person name="Myers G."/>
            <person name="Brinkac L.M."/>
            <person name="Nelson W.C."/>
            <person name="Deboy R.T."/>
            <person name="Angiuoli S."/>
            <person name="Khouri H."/>
            <person name="Dimitrov G."/>
            <person name="Robinson J.R."/>
            <person name="Mulligan S."/>
            <person name="Walker R.L."/>
            <person name="Elzer P.E."/>
            <person name="Hassan K.A."/>
            <person name="Paulsen I.T."/>
        </authorList>
    </citation>
    <scope>NUCLEOTIDE SEQUENCE [LARGE SCALE GENOMIC DNA]</scope>
    <source>
        <strain>ATCC 25840 / 63/290 / NCTC 10512</strain>
    </source>
</reference>
<sequence>MPKRVLQGVVVSDKNDKTVVVKVERRYSHPLLQKTVRQSKKYKAHDENNQFKVGDFVSIQESAPISKDKRWVVLTSEAAG</sequence>
<gene>
    <name evidence="1" type="primary">rpsQ</name>
    <name type="ordered locus">BOV_1187</name>
</gene>
<protein>
    <recommendedName>
        <fullName evidence="1">Small ribosomal subunit protein uS17</fullName>
    </recommendedName>
    <alternativeName>
        <fullName evidence="2">30S ribosomal protein S17</fullName>
    </alternativeName>
</protein>
<keyword id="KW-0687">Ribonucleoprotein</keyword>
<keyword id="KW-0689">Ribosomal protein</keyword>
<keyword id="KW-0694">RNA-binding</keyword>
<keyword id="KW-0699">rRNA-binding</keyword>
<proteinExistence type="inferred from homology"/>
<dbReference type="EMBL" id="CP000708">
    <property type="protein sequence ID" value="ABQ61153.1"/>
    <property type="molecule type" value="Genomic_DNA"/>
</dbReference>
<dbReference type="RefSeq" id="WP_002964353.1">
    <property type="nucleotide sequence ID" value="NC_009505.1"/>
</dbReference>
<dbReference type="SMR" id="A5VQZ7"/>
<dbReference type="GeneID" id="97533533"/>
<dbReference type="KEGG" id="bov:BOV_1187"/>
<dbReference type="HOGENOM" id="CLU_073626_1_1_5"/>
<dbReference type="Proteomes" id="UP000006383">
    <property type="component" value="Chromosome I"/>
</dbReference>
<dbReference type="GO" id="GO:0022627">
    <property type="term" value="C:cytosolic small ribosomal subunit"/>
    <property type="evidence" value="ECO:0007669"/>
    <property type="project" value="TreeGrafter"/>
</dbReference>
<dbReference type="GO" id="GO:0019843">
    <property type="term" value="F:rRNA binding"/>
    <property type="evidence" value="ECO:0007669"/>
    <property type="project" value="UniProtKB-UniRule"/>
</dbReference>
<dbReference type="GO" id="GO:0003735">
    <property type="term" value="F:structural constituent of ribosome"/>
    <property type="evidence" value="ECO:0007669"/>
    <property type="project" value="InterPro"/>
</dbReference>
<dbReference type="GO" id="GO:0006412">
    <property type="term" value="P:translation"/>
    <property type="evidence" value="ECO:0007669"/>
    <property type="project" value="UniProtKB-UniRule"/>
</dbReference>
<dbReference type="CDD" id="cd00364">
    <property type="entry name" value="Ribosomal_uS17"/>
    <property type="match status" value="1"/>
</dbReference>
<dbReference type="Gene3D" id="2.40.50.140">
    <property type="entry name" value="Nucleic acid-binding proteins"/>
    <property type="match status" value="1"/>
</dbReference>
<dbReference type="HAMAP" id="MF_01345_B">
    <property type="entry name" value="Ribosomal_uS17_B"/>
    <property type="match status" value="1"/>
</dbReference>
<dbReference type="InterPro" id="IPR012340">
    <property type="entry name" value="NA-bd_OB-fold"/>
</dbReference>
<dbReference type="InterPro" id="IPR000266">
    <property type="entry name" value="Ribosomal_uS17"/>
</dbReference>
<dbReference type="InterPro" id="IPR019984">
    <property type="entry name" value="Ribosomal_uS17_bact/chlr"/>
</dbReference>
<dbReference type="NCBIfam" id="NF004123">
    <property type="entry name" value="PRK05610.1"/>
    <property type="match status" value="1"/>
</dbReference>
<dbReference type="NCBIfam" id="TIGR03635">
    <property type="entry name" value="uS17_bact"/>
    <property type="match status" value="1"/>
</dbReference>
<dbReference type="PANTHER" id="PTHR10744">
    <property type="entry name" value="40S RIBOSOMAL PROTEIN S11 FAMILY MEMBER"/>
    <property type="match status" value="1"/>
</dbReference>
<dbReference type="PANTHER" id="PTHR10744:SF1">
    <property type="entry name" value="SMALL RIBOSOMAL SUBUNIT PROTEIN US17M"/>
    <property type="match status" value="1"/>
</dbReference>
<dbReference type="Pfam" id="PF00366">
    <property type="entry name" value="Ribosomal_S17"/>
    <property type="match status" value="1"/>
</dbReference>
<dbReference type="PRINTS" id="PR00973">
    <property type="entry name" value="RIBOSOMALS17"/>
</dbReference>
<dbReference type="SUPFAM" id="SSF50249">
    <property type="entry name" value="Nucleic acid-binding proteins"/>
    <property type="match status" value="1"/>
</dbReference>
<evidence type="ECO:0000255" key="1">
    <source>
        <dbReference type="HAMAP-Rule" id="MF_01345"/>
    </source>
</evidence>
<evidence type="ECO:0000305" key="2"/>
<accession>A5VQZ7</accession>
<organism>
    <name type="scientific">Brucella ovis (strain ATCC 25840 / 63/290 / NCTC 10512)</name>
    <dbReference type="NCBI Taxonomy" id="444178"/>
    <lineage>
        <taxon>Bacteria</taxon>
        <taxon>Pseudomonadati</taxon>
        <taxon>Pseudomonadota</taxon>
        <taxon>Alphaproteobacteria</taxon>
        <taxon>Hyphomicrobiales</taxon>
        <taxon>Brucellaceae</taxon>
        <taxon>Brucella/Ochrobactrum group</taxon>
        <taxon>Brucella</taxon>
    </lineage>
</organism>
<name>RS17_BRUO2</name>
<feature type="chain" id="PRO_1000054921" description="Small ribosomal subunit protein uS17">
    <location>
        <begin position="1"/>
        <end position="80"/>
    </location>
</feature>
<comment type="function">
    <text evidence="1">One of the primary rRNA binding proteins, it binds specifically to the 5'-end of 16S ribosomal RNA.</text>
</comment>
<comment type="subunit">
    <text evidence="1">Part of the 30S ribosomal subunit.</text>
</comment>
<comment type="similarity">
    <text evidence="1">Belongs to the universal ribosomal protein uS17 family.</text>
</comment>